<name>GGT3_HUMAN</name>
<keyword id="KW-0012">Acyltransferase</keyword>
<keyword id="KW-0317">Glutathione biosynthesis</keyword>
<keyword id="KW-0325">Glycoprotein</keyword>
<keyword id="KW-0378">Hydrolase</keyword>
<keyword id="KW-0472">Membrane</keyword>
<keyword id="KW-0645">Protease</keyword>
<keyword id="KW-1185">Reference proteome</keyword>
<keyword id="KW-0735">Signal-anchor</keyword>
<keyword id="KW-0808">Transferase</keyword>
<keyword id="KW-0812">Transmembrane</keyword>
<keyword id="KW-1133">Transmembrane helix</keyword>
<keyword id="KW-0865">Zymogen</keyword>
<feature type="chain" id="PRO_0000334690" description="Putative glutathione hydrolase 3 heavy chain" evidence="1">
    <location>
        <begin position="1"/>
        <end position="380"/>
    </location>
</feature>
<feature type="chain" id="PRO_0000334691" description="Putative glutathione hydrolase 3 light chain" evidence="1">
    <location>
        <begin position="381"/>
        <end position="568"/>
    </location>
</feature>
<feature type="topological domain" description="Cytoplasmic" evidence="4">
    <location>
        <begin position="1"/>
        <end position="4"/>
    </location>
</feature>
<feature type="transmembrane region" description="Helical; Signal-anchor for type II membrane protein" evidence="5">
    <location>
        <begin position="5"/>
        <end position="26"/>
    </location>
</feature>
<feature type="topological domain" description="Extracellular" evidence="4">
    <location>
        <begin position="27"/>
        <end position="568"/>
    </location>
</feature>
<feature type="active site" description="Nucleophile" evidence="1">
    <location>
        <position position="381"/>
    </location>
</feature>
<feature type="binding site" evidence="1">
    <location>
        <position position="107"/>
    </location>
    <ligand>
        <name>L-glutamate</name>
        <dbReference type="ChEBI" id="CHEBI:29985"/>
    </ligand>
</feature>
<feature type="binding site" evidence="1">
    <location>
        <position position="399"/>
    </location>
    <ligand>
        <name>L-glutamate</name>
        <dbReference type="ChEBI" id="CHEBI:29985"/>
    </ligand>
</feature>
<feature type="binding site" evidence="1">
    <location>
        <begin position="450"/>
        <end position="451"/>
    </location>
    <ligand>
        <name>L-glutamate</name>
        <dbReference type="ChEBI" id="CHEBI:29985"/>
    </ligand>
</feature>
<feature type="glycosylation site" description="N-linked (GlcNAc...) asparagine" evidence="4">
    <location>
        <position position="95"/>
    </location>
</feature>
<feature type="glycosylation site" description="N-linked (GlcNAc...) asparagine" evidence="4">
    <location>
        <position position="120"/>
    </location>
</feature>
<feature type="glycosylation site" description="N-linked (GlcNAc...) asparagine" evidence="4">
    <location>
        <position position="230"/>
    </location>
</feature>
<feature type="glycosylation site" description="N-linked (GlcNAc...) asparagine" evidence="4">
    <location>
        <position position="266"/>
    </location>
</feature>
<feature type="glycosylation site" description="N-linked (GlcNAc...) asparagine" evidence="4">
    <location>
        <position position="297"/>
    </location>
</feature>
<feature type="glycosylation site" description="N-linked (GlcNAc...) asparagine" evidence="4">
    <location>
        <position position="344"/>
    </location>
</feature>
<feature type="glycosylation site" description="N-linked (GlcNAc...) asparagine" evidence="4">
    <location>
        <position position="510"/>
    </location>
</feature>
<reference key="1">
    <citation type="journal article" date="1999" name="Nature">
        <title>The DNA sequence of human chromosome 22.</title>
        <authorList>
            <person name="Dunham I."/>
            <person name="Hunt A.R."/>
            <person name="Collins J.E."/>
            <person name="Bruskiewich R."/>
            <person name="Beare D.M."/>
            <person name="Clamp M."/>
            <person name="Smink L.J."/>
            <person name="Ainscough R."/>
            <person name="Almeida J.P."/>
            <person name="Babbage A.K."/>
            <person name="Bagguley C."/>
            <person name="Bailey J."/>
            <person name="Barlow K.F."/>
            <person name="Bates K.N."/>
            <person name="Beasley O.P."/>
            <person name="Bird C.P."/>
            <person name="Blakey S.E."/>
            <person name="Bridgeman A.M."/>
            <person name="Buck D."/>
            <person name="Burgess J."/>
            <person name="Burrill W.D."/>
            <person name="Burton J."/>
            <person name="Carder C."/>
            <person name="Carter N.P."/>
            <person name="Chen Y."/>
            <person name="Clark G."/>
            <person name="Clegg S.M."/>
            <person name="Cobley V.E."/>
            <person name="Cole C.G."/>
            <person name="Collier R.E."/>
            <person name="Connor R."/>
            <person name="Conroy D."/>
            <person name="Corby N.R."/>
            <person name="Coville G.J."/>
            <person name="Cox A.V."/>
            <person name="Davis J."/>
            <person name="Dawson E."/>
            <person name="Dhami P.D."/>
            <person name="Dockree C."/>
            <person name="Dodsworth S.J."/>
            <person name="Durbin R.M."/>
            <person name="Ellington A.G."/>
            <person name="Evans K.L."/>
            <person name="Fey J.M."/>
            <person name="Fleming K."/>
            <person name="French L."/>
            <person name="Garner A.A."/>
            <person name="Gilbert J.G.R."/>
            <person name="Goward M.E."/>
            <person name="Grafham D.V."/>
            <person name="Griffiths M.N.D."/>
            <person name="Hall C."/>
            <person name="Hall R.E."/>
            <person name="Hall-Tamlyn G."/>
            <person name="Heathcott R.W."/>
            <person name="Ho S."/>
            <person name="Holmes S."/>
            <person name="Hunt S.E."/>
            <person name="Jones M.C."/>
            <person name="Kershaw J."/>
            <person name="Kimberley A.M."/>
            <person name="King A."/>
            <person name="Laird G.K."/>
            <person name="Langford C.F."/>
            <person name="Leversha M.A."/>
            <person name="Lloyd C."/>
            <person name="Lloyd D.M."/>
            <person name="Martyn I.D."/>
            <person name="Mashreghi-Mohammadi M."/>
            <person name="Matthews L.H."/>
            <person name="Mccann O.T."/>
            <person name="Mcclay J."/>
            <person name="Mclaren S."/>
            <person name="McMurray A.A."/>
            <person name="Milne S.A."/>
            <person name="Mortimore B.J."/>
            <person name="Odell C.N."/>
            <person name="Pavitt R."/>
            <person name="Pearce A.V."/>
            <person name="Pearson D."/>
            <person name="Phillimore B.J.C.T."/>
            <person name="Phillips S.H."/>
            <person name="Plumb R.W."/>
            <person name="Ramsay H."/>
            <person name="Ramsey Y."/>
            <person name="Rogers L."/>
            <person name="Ross M.T."/>
            <person name="Scott C.E."/>
            <person name="Sehra H.K."/>
            <person name="Skuce C.D."/>
            <person name="Smalley S."/>
            <person name="Smith M.L."/>
            <person name="Soderlund C."/>
            <person name="Spragon L."/>
            <person name="Steward C.A."/>
            <person name="Sulston J.E."/>
            <person name="Swann R.M."/>
            <person name="Vaudin M."/>
            <person name="Wall M."/>
            <person name="Wallis J.M."/>
            <person name="Whiteley M.N."/>
            <person name="Willey D.L."/>
            <person name="Williams L."/>
            <person name="Williams S.A."/>
            <person name="Williamson H."/>
            <person name="Wilmer T.E."/>
            <person name="Wilming L."/>
            <person name="Wright C.L."/>
            <person name="Hubbard T."/>
            <person name="Bentley D.R."/>
            <person name="Beck S."/>
            <person name="Rogers J."/>
            <person name="Shimizu N."/>
            <person name="Minoshima S."/>
            <person name="Kawasaki K."/>
            <person name="Sasaki T."/>
            <person name="Asakawa S."/>
            <person name="Kudoh J."/>
            <person name="Shintani A."/>
            <person name="Shibuya K."/>
            <person name="Yoshizaki Y."/>
            <person name="Aoki N."/>
            <person name="Mitsuyama S."/>
            <person name="Roe B.A."/>
            <person name="Chen F."/>
            <person name="Chu L."/>
            <person name="Crabtree J."/>
            <person name="Deschamps S."/>
            <person name="Do A."/>
            <person name="Do T."/>
            <person name="Dorman A."/>
            <person name="Fang F."/>
            <person name="Fu Y."/>
            <person name="Hu P."/>
            <person name="Hua A."/>
            <person name="Kenton S."/>
            <person name="Lai H."/>
            <person name="Lao H.I."/>
            <person name="Lewis J."/>
            <person name="Lewis S."/>
            <person name="Lin S.-P."/>
            <person name="Loh P."/>
            <person name="Malaj E."/>
            <person name="Nguyen T."/>
            <person name="Pan H."/>
            <person name="Phan S."/>
            <person name="Qi S."/>
            <person name="Qian Y."/>
            <person name="Ray L."/>
            <person name="Ren Q."/>
            <person name="Shaull S."/>
            <person name="Sloan D."/>
            <person name="Song L."/>
            <person name="Wang Q."/>
            <person name="Wang Y."/>
            <person name="Wang Z."/>
            <person name="White J."/>
            <person name="Willingham D."/>
            <person name="Wu H."/>
            <person name="Yao Z."/>
            <person name="Zhan M."/>
            <person name="Zhang G."/>
            <person name="Chissoe S."/>
            <person name="Murray J."/>
            <person name="Miller N."/>
            <person name="Minx P."/>
            <person name="Fulton R."/>
            <person name="Johnson D."/>
            <person name="Bemis G."/>
            <person name="Bentley D."/>
            <person name="Bradshaw H."/>
            <person name="Bourne S."/>
            <person name="Cordes M."/>
            <person name="Du Z."/>
            <person name="Fulton L."/>
            <person name="Goela D."/>
            <person name="Graves T."/>
            <person name="Hawkins J."/>
            <person name="Hinds K."/>
            <person name="Kemp K."/>
            <person name="Latreille P."/>
            <person name="Layman D."/>
            <person name="Ozersky P."/>
            <person name="Rohlfing T."/>
            <person name="Scheet P."/>
            <person name="Walker C."/>
            <person name="Wamsley A."/>
            <person name="Wohldmann P."/>
            <person name="Pepin K."/>
            <person name="Nelson J."/>
            <person name="Korf I."/>
            <person name="Bedell J.A."/>
            <person name="Hillier L.W."/>
            <person name="Mardis E."/>
            <person name="Waterston R."/>
            <person name="Wilson R."/>
            <person name="Emanuel B.S."/>
            <person name="Shaikh T."/>
            <person name="Kurahashi H."/>
            <person name="Saitta S."/>
            <person name="Budarf M.L."/>
            <person name="McDermid H.E."/>
            <person name="Johnson A."/>
            <person name="Wong A.C.C."/>
            <person name="Morrow B.E."/>
            <person name="Edelmann L."/>
            <person name="Kim U.J."/>
            <person name="Shizuya H."/>
            <person name="Simon M.I."/>
            <person name="Dumanski J.P."/>
            <person name="Peyrard M."/>
            <person name="Kedra D."/>
            <person name="Seroussi E."/>
            <person name="Fransson I."/>
            <person name="Tapia I."/>
            <person name="Bruder C.E."/>
            <person name="O'Brien K.P."/>
            <person name="Wilkinson P."/>
            <person name="Bodenteich A."/>
            <person name="Hartman K."/>
            <person name="Hu X."/>
            <person name="Khan A.S."/>
            <person name="Lane L."/>
            <person name="Tilahun Y."/>
            <person name="Wright H."/>
        </authorList>
    </citation>
    <scope>NUCLEOTIDE SEQUENCE [LARGE SCALE GENOMIC DNA]</scope>
</reference>
<reference key="2">
    <citation type="journal article" date="2008" name="Hum. Genet.">
        <title>The human gamma-glutamyltransferase gene family.</title>
        <authorList>
            <person name="Heisterkamp N."/>
            <person name="Groffen J."/>
            <person name="Warburton D."/>
            <person name="Sneddon T.P."/>
        </authorList>
    </citation>
    <scope>IDENTIFICATION</scope>
    <scope>NOMENCLATURE</scope>
</reference>
<proteinExistence type="uncertain"/>
<comment type="function">
    <text evidence="3">Hydrolyzes and transfers gamma-glutamyl moieties from glutathione and other gamma-glutamyl compounds to acceptors.</text>
</comment>
<comment type="catalytic activity">
    <reaction evidence="3">
        <text>an N-terminal (5-L-glutamyl)-[peptide] + an alpha-amino acid = 5-L-glutamyl amino acid + an N-terminal L-alpha-aminoacyl-[peptide]</text>
        <dbReference type="Rhea" id="RHEA:23904"/>
        <dbReference type="Rhea" id="RHEA-COMP:9780"/>
        <dbReference type="Rhea" id="RHEA-COMP:9795"/>
        <dbReference type="ChEBI" id="CHEBI:77644"/>
        <dbReference type="ChEBI" id="CHEBI:78597"/>
        <dbReference type="ChEBI" id="CHEBI:78599"/>
        <dbReference type="ChEBI" id="CHEBI:78608"/>
        <dbReference type="EC" id="2.3.2.2"/>
    </reaction>
</comment>
<comment type="catalytic activity">
    <reaction evidence="3">
        <text>glutathione + H2O = L-cysteinylglycine + L-glutamate</text>
        <dbReference type="Rhea" id="RHEA:28807"/>
        <dbReference type="ChEBI" id="CHEBI:15377"/>
        <dbReference type="ChEBI" id="CHEBI:29985"/>
        <dbReference type="ChEBI" id="CHEBI:57925"/>
        <dbReference type="ChEBI" id="CHEBI:61694"/>
        <dbReference type="EC" id="3.4.19.13"/>
    </reaction>
</comment>
<comment type="catalytic activity">
    <reaction evidence="3">
        <text>an S-substituted glutathione + H2O = an S-substituted L-cysteinylglycine + L-glutamate</text>
        <dbReference type="Rhea" id="RHEA:59468"/>
        <dbReference type="ChEBI" id="CHEBI:15377"/>
        <dbReference type="ChEBI" id="CHEBI:29985"/>
        <dbReference type="ChEBI" id="CHEBI:90779"/>
        <dbReference type="ChEBI" id="CHEBI:143103"/>
        <dbReference type="EC" id="3.4.19.13"/>
    </reaction>
</comment>
<comment type="pathway">
    <text evidence="3">Sulfur metabolism; glutathione metabolism.</text>
</comment>
<comment type="subcellular location">
    <subcellularLocation>
        <location evidence="3">Membrane</location>
        <topology evidence="2">Single-pass type II membrane protein</topology>
    </subcellularLocation>
</comment>
<comment type="PTM">
    <text evidence="3">Cleaved by autocatalysis into a large and a small subunit.</text>
</comment>
<comment type="similarity">
    <text evidence="5">Belongs to the gamma-glutamyltransferase family.</text>
</comment>
<comment type="caution">
    <text evidence="5">Could be the product of a pseudogene.</text>
</comment>
<sequence>MKKKLVVLGLLAVVLVLVIVGLCLWLPSASKEPDNHVYTRAAVAADAKQCLEIGRDTLRDGGSAVDAAIAALLCVGLMNAHSMGIGVGLFLTIYNSTTRKAEVINAREVAPRLAFASMFNSSEQSQKGGLSVAVPGEIRGYELAHQRHGRLPWARLFQPSIQLARQGFPVGKGLAAVLENKRTVIEQQPVLCEVFCRDRKVLREGERLTLPRLADTYEMLAIEGAQAFYNGSLMAQIVKDIQAAGGIVTAEDLNNYCAELIEHPLNISLGDAVLYMPSARLSGPVLALILNILKGYNFSRESVETPEQKGLTYHRIVEAFRFAYAKRTLLGDPKFVDVTEVVRNMTSEFFAAQLRSQISDHTTHPISYYKPEFYTPDDGGTAHLSVVAEDGSAVSATSTINLYFGSKVCSPVSGILFNNMDDFSSPSITNEFGAPPSPANFIQPGKQPLLSMCPTIMVGQDGQVRMVVGAAGGTQITTDTALAIIYNLWFGYDVKRAVEEPRLHNKLLPNVTTVERNIDQAVTAALETRHHHTQIASTFIAVVQAIVRTAGGWAAASDSRKGGEPAGY</sequence>
<dbReference type="EC" id="3.4.19.13" evidence="3"/>
<dbReference type="EC" id="2.3.2.2" evidence="3"/>
<dbReference type="EMBL" id="AC008132">
    <property type="status" value="NOT_ANNOTATED_CDS"/>
    <property type="molecule type" value="Genomic_DNA"/>
</dbReference>
<dbReference type="SMR" id="A6NGU5"/>
<dbReference type="FunCoup" id="A6NGU5">
    <property type="interactions" value="153"/>
</dbReference>
<dbReference type="IntAct" id="A6NGU5">
    <property type="interactions" value="2"/>
</dbReference>
<dbReference type="GlyConnect" id="1694">
    <property type="glycosylation" value="4 N-Linked glycans (2 sites)"/>
</dbReference>
<dbReference type="GlyCosmos" id="A6NGU5">
    <property type="glycosylation" value="7 sites, 4 glycans"/>
</dbReference>
<dbReference type="GlyGen" id="A6NGU5">
    <property type="glycosylation" value="9 sites, 4 N-linked glycans (2 sites), 1 O-linked glycan (2 sites)"/>
</dbReference>
<dbReference type="iPTMnet" id="A6NGU5"/>
<dbReference type="BioMuta" id="HGNC:4252"/>
<dbReference type="jPOST" id="A6NGU5"/>
<dbReference type="MassIVE" id="A6NGU5"/>
<dbReference type="PeptideAtlas" id="A6NGU5"/>
<dbReference type="Pumba" id="A6NGU5"/>
<dbReference type="AGR" id="HGNC:4252"/>
<dbReference type="GeneCards" id="GGT3P"/>
<dbReference type="HGNC" id="HGNC:4252">
    <property type="gene designation" value="GGT3P"/>
</dbReference>
<dbReference type="neXtProt" id="NX_A6NGU5"/>
<dbReference type="InParanoid" id="A6NGU5"/>
<dbReference type="PAN-GO" id="A6NGU5">
    <property type="GO annotations" value="6 GO annotations based on evolutionary models"/>
</dbReference>
<dbReference type="PathwayCommons" id="A6NGU5"/>
<dbReference type="Reactome" id="R-HSA-174403">
    <property type="pathway name" value="Glutathione synthesis and recycling"/>
</dbReference>
<dbReference type="Reactome" id="R-HSA-5423646">
    <property type="pathway name" value="Aflatoxin activation and detoxification"/>
</dbReference>
<dbReference type="Reactome" id="R-HSA-9753281">
    <property type="pathway name" value="Paracetamol ADME"/>
</dbReference>
<dbReference type="UniPathway" id="UPA00204"/>
<dbReference type="ChiTaRS" id="GGT3P">
    <property type="organism name" value="human"/>
</dbReference>
<dbReference type="Pharos" id="A6NGU5">
    <property type="development level" value="Tdark"/>
</dbReference>
<dbReference type="Proteomes" id="UP000005640">
    <property type="component" value="Unplaced"/>
</dbReference>
<dbReference type="RNAct" id="A6NGU5">
    <property type="molecule type" value="protein"/>
</dbReference>
<dbReference type="GO" id="GO:0070062">
    <property type="term" value="C:extracellular exosome"/>
    <property type="evidence" value="ECO:0007005"/>
    <property type="project" value="UniProtKB"/>
</dbReference>
<dbReference type="GO" id="GO:0005886">
    <property type="term" value="C:plasma membrane"/>
    <property type="evidence" value="ECO:0000318"/>
    <property type="project" value="GO_Central"/>
</dbReference>
<dbReference type="GO" id="GO:0036374">
    <property type="term" value="F:glutathione hydrolase activity"/>
    <property type="evidence" value="ECO:0000318"/>
    <property type="project" value="GO_Central"/>
</dbReference>
<dbReference type="GO" id="GO:0103068">
    <property type="term" value="F:leukotriene C4 gamma-glutamyl transferase activity"/>
    <property type="evidence" value="ECO:0007669"/>
    <property type="project" value="UniProtKB-EC"/>
</dbReference>
<dbReference type="GO" id="GO:0006750">
    <property type="term" value="P:glutathione biosynthetic process"/>
    <property type="evidence" value="ECO:0007669"/>
    <property type="project" value="UniProtKB-KW"/>
</dbReference>
<dbReference type="GO" id="GO:0006751">
    <property type="term" value="P:glutathione catabolic process"/>
    <property type="evidence" value="ECO:0000318"/>
    <property type="project" value="GO_Central"/>
</dbReference>
<dbReference type="GO" id="GO:1901750">
    <property type="term" value="P:leukotriene D4 biosynthetic process"/>
    <property type="evidence" value="ECO:0000250"/>
    <property type="project" value="UniProtKB"/>
</dbReference>
<dbReference type="GO" id="GO:0031179">
    <property type="term" value="P:peptide modification"/>
    <property type="evidence" value="ECO:0000318"/>
    <property type="project" value="GO_Central"/>
</dbReference>
<dbReference type="GO" id="GO:0006508">
    <property type="term" value="P:proteolysis"/>
    <property type="evidence" value="ECO:0007669"/>
    <property type="project" value="UniProtKB-KW"/>
</dbReference>
<dbReference type="GO" id="GO:0002682">
    <property type="term" value="P:regulation of immune system process"/>
    <property type="evidence" value="ECO:0000318"/>
    <property type="project" value="GO_Central"/>
</dbReference>
<dbReference type="GO" id="GO:0050727">
    <property type="term" value="P:regulation of inflammatory response"/>
    <property type="evidence" value="ECO:0000318"/>
    <property type="project" value="GO_Central"/>
</dbReference>
<dbReference type="FunFam" id="3.60.20.40:FF:000007">
    <property type="entry name" value="Glutathione hydrolase 1 proenzyme"/>
    <property type="match status" value="1"/>
</dbReference>
<dbReference type="FunFam" id="1.10.246.130:FF:000002">
    <property type="entry name" value="glutathione hydrolase 1 proenzyme"/>
    <property type="match status" value="1"/>
</dbReference>
<dbReference type="Gene3D" id="1.10.246.130">
    <property type="match status" value="1"/>
</dbReference>
<dbReference type="Gene3D" id="3.60.20.40">
    <property type="match status" value="1"/>
</dbReference>
<dbReference type="InterPro" id="IPR055262">
    <property type="entry name" value="GGT_CS"/>
</dbReference>
<dbReference type="InterPro" id="IPR043138">
    <property type="entry name" value="GGT_lsub_C"/>
</dbReference>
<dbReference type="InterPro" id="IPR000101">
    <property type="entry name" value="GGT_peptidase"/>
</dbReference>
<dbReference type="InterPro" id="IPR043137">
    <property type="entry name" value="GGT_ssub"/>
</dbReference>
<dbReference type="InterPro" id="IPR029055">
    <property type="entry name" value="Ntn_hydrolases_N"/>
</dbReference>
<dbReference type="NCBIfam" id="TIGR00066">
    <property type="entry name" value="g_glut_trans"/>
    <property type="match status" value="1"/>
</dbReference>
<dbReference type="PANTHER" id="PTHR11686">
    <property type="entry name" value="GAMMA GLUTAMYL TRANSPEPTIDASE"/>
    <property type="match status" value="1"/>
</dbReference>
<dbReference type="PANTHER" id="PTHR11686:SF56">
    <property type="entry name" value="GLUTATHIONE HYDROLASE 1 PROENZYME-RELATED"/>
    <property type="match status" value="1"/>
</dbReference>
<dbReference type="Pfam" id="PF01019">
    <property type="entry name" value="G_glu_transpept"/>
    <property type="match status" value="1"/>
</dbReference>
<dbReference type="PRINTS" id="PR01210">
    <property type="entry name" value="GGTRANSPTASE"/>
</dbReference>
<dbReference type="SUPFAM" id="SSF56235">
    <property type="entry name" value="N-terminal nucleophile aminohydrolases (Ntn hydrolases)"/>
    <property type="match status" value="1"/>
</dbReference>
<dbReference type="PROSITE" id="PS00462">
    <property type="entry name" value="G_GLU_TRANSPEPTIDASE"/>
    <property type="match status" value="1"/>
</dbReference>
<accession>A6NGU5</accession>
<gene>
    <name evidence="6" type="primary">GGT3P</name>
    <name type="synonym">GGT3</name>
</gene>
<organism>
    <name type="scientific">Homo sapiens</name>
    <name type="common">Human</name>
    <dbReference type="NCBI Taxonomy" id="9606"/>
    <lineage>
        <taxon>Eukaryota</taxon>
        <taxon>Metazoa</taxon>
        <taxon>Chordata</taxon>
        <taxon>Craniata</taxon>
        <taxon>Vertebrata</taxon>
        <taxon>Euteleostomi</taxon>
        <taxon>Mammalia</taxon>
        <taxon>Eutheria</taxon>
        <taxon>Euarchontoglires</taxon>
        <taxon>Primates</taxon>
        <taxon>Haplorrhini</taxon>
        <taxon>Catarrhini</taxon>
        <taxon>Hominidae</taxon>
        <taxon>Homo</taxon>
    </lineage>
</organism>
<protein>
    <recommendedName>
        <fullName evidence="5">Putative glutathione hydrolase 3 proenzyme</fullName>
        <ecNumber evidence="3">3.4.19.13</ecNumber>
    </recommendedName>
    <alternativeName>
        <fullName>Gamma-glutamyltransferase 3</fullName>
    </alternativeName>
    <alternativeName>
        <fullName>Putative gamma-glutamyltranspeptidase 3</fullName>
        <shortName>GGT 3</shortName>
        <ecNumber evidence="3">2.3.2.2</ecNumber>
    </alternativeName>
    <component>
        <recommendedName>
            <fullName>Putative glutathione hydrolase 3 heavy chain</fullName>
        </recommendedName>
    </component>
    <component>
        <recommendedName>
            <fullName>Putative glutathione hydrolase 3 light chain</fullName>
        </recommendedName>
    </component>
</protein>
<evidence type="ECO:0000250" key="1"/>
<evidence type="ECO:0000250" key="2">
    <source>
        <dbReference type="UniProtKB" id="P07314"/>
    </source>
</evidence>
<evidence type="ECO:0000250" key="3">
    <source>
        <dbReference type="UniProtKB" id="P19440"/>
    </source>
</evidence>
<evidence type="ECO:0000255" key="4"/>
<evidence type="ECO:0000305" key="5"/>
<evidence type="ECO:0000312" key="6">
    <source>
        <dbReference type="HGNC" id="HGNC:4252"/>
    </source>
</evidence>